<sequence>MASGVAVSDGVIKVFNDMKVRKSSTPEEVKKRKKAVLFCLSEDKKNIILEEGKEILVGDVGQTVDDPYATFVKMLPDKDCRYALYDATYETKESKKEDLVFIFWAPECAPLKSKMIYASSKDAIKKKLTGIKHELQANCYEEVKDRCTLAEKLGGSAVISLEGKPL</sequence>
<comment type="function">
    <text evidence="2 3">Binds to F-actin and exhibits pH-sensitive F-actin depolymerizing activity (By similarity). Important for normal progress through mitosis and normal cytokinesis (By similarity). In conjunction with the subcortical maternal complex (SCMC), plays an essential role for zygotes to progress beyond the first embryonic cell divisions via regulation of actin dynamics (By similarity). Required for the centralization of the mitotic spindle and symmetric division of zygotes (By similarity). Plays a role in the regulation of cell morphology and cytoskeletal organization in epithelial cells (By similarity). Required for the up-regulation of atypical chemokine receptor ACKR2 from endosomal compartment to cell membrane, increasing its efficiency in chemokine uptake and degradation (By similarity). Required for neural tube morphogenesis and neural crest cell migration (By similarity).</text>
</comment>
<comment type="subunit">
    <text evidence="1 2">Can bind G- and F-actin in a 1:1 ratio of cofilin to actin (By similarity). It is a major component of intranuclear and cytoplasmic actin rods (By similarity). Interacts with the subcortical maternal complex (SCMC) via interaction with TLE6 and NLRP5 (By similarity). Interacts with C9orf72 (By similarity).</text>
</comment>
<comment type="subcellular location">
    <subcellularLocation>
        <location evidence="1">Nucleus matrix</location>
    </subcellularLocation>
    <subcellularLocation>
        <location evidence="1">Cytoplasm</location>
        <location evidence="1">Cytoskeleton</location>
    </subcellularLocation>
    <subcellularLocation>
        <location evidence="1">Cell projection</location>
        <location evidence="1">Ruffle membrane</location>
        <topology evidence="1">Peripheral membrane protein</topology>
        <orientation evidence="1">Cytoplasmic side</orientation>
    </subcellularLocation>
    <subcellularLocation>
        <location evidence="1">Cell projection</location>
        <location evidence="1">Lamellipodium membrane</location>
        <topology evidence="1">Peripheral membrane protein</topology>
        <orientation evidence="1">Cytoplasmic side</orientation>
    </subcellularLocation>
    <subcellularLocation>
        <location evidence="2">Cell projection</location>
        <location evidence="2">Lamellipodium</location>
    </subcellularLocation>
    <subcellularLocation>
        <location evidence="2">Cell projection</location>
        <location evidence="2">Growth cone</location>
    </subcellularLocation>
    <subcellularLocation>
        <location evidence="2">Cell projection</location>
        <location evidence="2">Axon</location>
    </subcellularLocation>
    <text evidence="1 3">Colocalizes with the actin cytoskeleton in membrane ruffles and lamellipodia. Detected at the cleavage furrow and contractile ring during cytokinesis. Almost completely in nucleus in cells exposed to heat shock or 10% dimethyl sulfoxide.</text>
</comment>
<comment type="PTM">
    <text evidence="4">Inactivated by phosphorylation on Ser-3. Phosphorylated on Ser-3 in resting cells (By similarity). Dephosphorylated by PDXP/chronophin; this restores its activity in promoting actin filament depolymerization. The phosphorylation of Ser-24 may prevent recognition of the nuclear localization signal (By similarity). Phosphorylated via a ARRB1-RAC1-LIMK1-PAK1 cascade upon active ligand stimulation of atypical chemokine receptor ACKR2 (By similarity).</text>
</comment>
<comment type="similarity">
    <text evidence="7">Belongs to the actin-binding proteins ADF family.</text>
</comment>
<feature type="initiator methionine" description="Removed" evidence="3">
    <location>
        <position position="1"/>
    </location>
</feature>
<feature type="chain" id="PRO_0000214897" description="Cofilin-1">
    <location>
        <begin position="2"/>
        <end position="166"/>
    </location>
</feature>
<feature type="domain" description="ADF-H" evidence="6">
    <location>
        <begin position="4"/>
        <end position="153"/>
    </location>
</feature>
<feature type="short sequence motif" description="Nuclear localization signal" evidence="5">
    <location>
        <begin position="30"/>
        <end position="34"/>
    </location>
</feature>
<feature type="modified residue" description="N-acetylalanine" evidence="3">
    <location>
        <position position="2"/>
    </location>
</feature>
<feature type="modified residue" description="Phosphoserine" evidence="3">
    <location>
        <position position="3"/>
    </location>
</feature>
<feature type="modified residue" description="Phosphoserine" evidence="2">
    <location>
        <position position="8"/>
    </location>
</feature>
<feature type="modified residue" description="N6-acetyllysine" evidence="3">
    <location>
        <position position="13"/>
    </location>
</feature>
<feature type="modified residue" description="Phosphothreonine" evidence="3">
    <location>
        <position position="25"/>
    </location>
</feature>
<feature type="modified residue" description="Phosphoserine" evidence="3">
    <location>
        <position position="41"/>
    </location>
</feature>
<feature type="modified residue" description="Phosphotyrosine" evidence="3">
    <location>
        <position position="68"/>
    </location>
</feature>
<feature type="modified residue" description="N6-acetyllysine" evidence="3">
    <location>
        <position position="73"/>
    </location>
</feature>
<feature type="modified residue" description="Phosphotyrosine" evidence="3">
    <location>
        <position position="140"/>
    </location>
</feature>
<feature type="modified residue" description="N6-acetyllysine" evidence="3">
    <location>
        <position position="144"/>
    </location>
</feature>
<feature type="modified residue" description="Phosphoserine" evidence="3">
    <location>
        <position position="156"/>
    </location>
</feature>
<feature type="cross-link" description="Glycyl lysine isopeptide (Lys-Gly) (interchain with G-Cter in SUMO2)" evidence="3">
    <location>
        <position position="132"/>
    </location>
</feature>
<name>COF1_BOVIN</name>
<dbReference type="EMBL" id="BT020963">
    <property type="protein sequence ID" value="AAX08980.1"/>
    <property type="molecule type" value="mRNA"/>
</dbReference>
<dbReference type="EMBL" id="BC103077">
    <property type="protein sequence ID" value="AAI03078.1"/>
    <property type="molecule type" value="mRNA"/>
</dbReference>
<dbReference type="RefSeq" id="NP_001015655.1">
    <property type="nucleotide sequence ID" value="NM_001015655.1"/>
</dbReference>
<dbReference type="SMR" id="Q5E9F7"/>
<dbReference type="FunCoup" id="Q5E9F7">
    <property type="interactions" value="2162"/>
</dbReference>
<dbReference type="STRING" id="9913.ENSBTAP00000028602"/>
<dbReference type="PaxDb" id="9913-ENSBTAP00000028602"/>
<dbReference type="PeptideAtlas" id="Q5E9F7"/>
<dbReference type="Ensembl" id="ENSBTAT00000028602.7">
    <property type="protein sequence ID" value="ENSBTAP00000028602.5"/>
    <property type="gene ID" value="ENSBTAG00000021455.7"/>
</dbReference>
<dbReference type="GeneID" id="534553"/>
<dbReference type="KEGG" id="bta:534553"/>
<dbReference type="CTD" id="1072"/>
<dbReference type="VEuPathDB" id="HostDB:ENSBTAG00000021455"/>
<dbReference type="VGNC" id="VGNC:27253">
    <property type="gene designation" value="CFL1"/>
</dbReference>
<dbReference type="eggNOG" id="KOG1735">
    <property type="taxonomic scope" value="Eukaryota"/>
</dbReference>
<dbReference type="GeneTree" id="ENSGT00950000183000"/>
<dbReference type="HOGENOM" id="CLU_094004_0_0_1"/>
<dbReference type="InParanoid" id="Q5E9F7"/>
<dbReference type="OMA" id="WSMIYAT"/>
<dbReference type="OrthoDB" id="10249245at2759"/>
<dbReference type="TreeFam" id="TF328601"/>
<dbReference type="Proteomes" id="UP000009136">
    <property type="component" value="Chromosome 29"/>
</dbReference>
<dbReference type="Bgee" id="ENSBTAG00000021455">
    <property type="expression patterns" value="Expressed in Ammon's horn and 105 other cell types or tissues"/>
</dbReference>
<dbReference type="GO" id="GO:0015629">
    <property type="term" value="C:actin cytoskeleton"/>
    <property type="evidence" value="ECO:0000318"/>
    <property type="project" value="GO_Central"/>
</dbReference>
<dbReference type="GO" id="GO:0005737">
    <property type="term" value="C:cytoplasm"/>
    <property type="evidence" value="ECO:0000318"/>
    <property type="project" value="GO_Central"/>
</dbReference>
<dbReference type="GO" id="GO:0030426">
    <property type="term" value="C:growth cone"/>
    <property type="evidence" value="ECO:0007669"/>
    <property type="project" value="UniProtKB-SubCell"/>
</dbReference>
<dbReference type="GO" id="GO:0030027">
    <property type="term" value="C:lamellipodium"/>
    <property type="evidence" value="ECO:0000250"/>
    <property type="project" value="UniProtKB"/>
</dbReference>
<dbReference type="GO" id="GO:0031258">
    <property type="term" value="C:lamellipodium membrane"/>
    <property type="evidence" value="ECO:0007669"/>
    <property type="project" value="UniProtKB-SubCell"/>
</dbReference>
<dbReference type="GO" id="GO:0016363">
    <property type="term" value="C:nuclear matrix"/>
    <property type="evidence" value="ECO:0007669"/>
    <property type="project" value="UniProtKB-SubCell"/>
</dbReference>
<dbReference type="GO" id="GO:0032587">
    <property type="term" value="C:ruffle membrane"/>
    <property type="evidence" value="ECO:0007669"/>
    <property type="project" value="UniProtKB-SubCell"/>
</dbReference>
<dbReference type="GO" id="GO:0051015">
    <property type="term" value="F:actin filament binding"/>
    <property type="evidence" value="ECO:0000250"/>
    <property type="project" value="UniProtKB"/>
</dbReference>
<dbReference type="GO" id="GO:0030043">
    <property type="term" value="P:actin filament fragmentation"/>
    <property type="evidence" value="ECO:0000318"/>
    <property type="project" value="GO_Central"/>
</dbReference>
<dbReference type="GO" id="GO:0007015">
    <property type="term" value="P:actin filament organization"/>
    <property type="evidence" value="ECO:0000250"/>
    <property type="project" value="UniProtKB"/>
</dbReference>
<dbReference type="GO" id="GO:0051014">
    <property type="term" value="P:actin filament severing"/>
    <property type="evidence" value="ECO:0000318"/>
    <property type="project" value="GO_Central"/>
</dbReference>
<dbReference type="GO" id="GO:0007010">
    <property type="term" value="P:cytoskeleton organization"/>
    <property type="evidence" value="ECO:0000250"/>
    <property type="project" value="UniProtKB"/>
</dbReference>
<dbReference type="GO" id="GO:0051293">
    <property type="term" value="P:establishment of spindle localization"/>
    <property type="evidence" value="ECO:0000250"/>
    <property type="project" value="UniProtKB"/>
</dbReference>
<dbReference type="GO" id="GO:0000281">
    <property type="term" value="P:mitotic cytokinesis"/>
    <property type="evidence" value="ECO:0000318"/>
    <property type="project" value="GO_Central"/>
</dbReference>
<dbReference type="GO" id="GO:0040019">
    <property type="term" value="P:positive regulation of embryonic development"/>
    <property type="evidence" value="ECO:0000250"/>
    <property type="project" value="UniProtKB"/>
</dbReference>
<dbReference type="GO" id="GO:0022604">
    <property type="term" value="P:regulation of cell morphogenesis"/>
    <property type="evidence" value="ECO:0000250"/>
    <property type="project" value="UniProtKB"/>
</dbReference>
<dbReference type="CDD" id="cd11286">
    <property type="entry name" value="ADF_cofilin_like"/>
    <property type="match status" value="1"/>
</dbReference>
<dbReference type="FunFam" id="3.40.20.10:FF:000010">
    <property type="entry name" value="Putative destrin"/>
    <property type="match status" value="1"/>
</dbReference>
<dbReference type="Gene3D" id="3.40.20.10">
    <property type="entry name" value="Severin"/>
    <property type="match status" value="1"/>
</dbReference>
<dbReference type="InterPro" id="IPR002108">
    <property type="entry name" value="ADF-H"/>
</dbReference>
<dbReference type="InterPro" id="IPR029006">
    <property type="entry name" value="ADF-H/Gelsolin-like_dom_sf"/>
</dbReference>
<dbReference type="InterPro" id="IPR017904">
    <property type="entry name" value="ADF/Cofilin"/>
</dbReference>
<dbReference type="PANTHER" id="PTHR11913">
    <property type="entry name" value="COFILIN-RELATED"/>
    <property type="match status" value="1"/>
</dbReference>
<dbReference type="Pfam" id="PF00241">
    <property type="entry name" value="Cofilin_ADF"/>
    <property type="match status" value="1"/>
</dbReference>
<dbReference type="PRINTS" id="PR00006">
    <property type="entry name" value="COFILIN"/>
</dbReference>
<dbReference type="SMART" id="SM00102">
    <property type="entry name" value="ADF"/>
    <property type="match status" value="1"/>
</dbReference>
<dbReference type="SUPFAM" id="SSF55753">
    <property type="entry name" value="Actin depolymerizing proteins"/>
    <property type="match status" value="1"/>
</dbReference>
<dbReference type="PROSITE" id="PS51263">
    <property type="entry name" value="ADF_H"/>
    <property type="match status" value="1"/>
</dbReference>
<reference key="1">
    <citation type="journal article" date="2005" name="BMC Genomics">
        <title>Characterization of 954 bovine full-CDS cDNA sequences.</title>
        <authorList>
            <person name="Harhay G.P."/>
            <person name="Sonstegard T.S."/>
            <person name="Keele J.W."/>
            <person name="Heaton M.P."/>
            <person name="Clawson M.L."/>
            <person name="Snelling W.M."/>
            <person name="Wiedmann R.T."/>
            <person name="Van Tassell C.P."/>
            <person name="Smith T.P.L."/>
        </authorList>
    </citation>
    <scope>NUCLEOTIDE SEQUENCE [LARGE SCALE MRNA]</scope>
</reference>
<reference key="2">
    <citation type="submission" date="2005-08" db="EMBL/GenBank/DDBJ databases">
        <authorList>
            <consortium name="NIH - Mammalian Gene Collection (MGC) project"/>
        </authorList>
    </citation>
    <scope>NUCLEOTIDE SEQUENCE [LARGE SCALE MRNA]</scope>
    <source>
        <strain>Crossbred X Angus</strain>
        <tissue>Ileum</tissue>
    </source>
</reference>
<protein>
    <recommendedName>
        <fullName>Cofilin-1</fullName>
    </recommendedName>
    <alternativeName>
        <fullName>Cofilin, non-muscle isoform</fullName>
    </alternativeName>
</protein>
<evidence type="ECO:0000250" key="1">
    <source>
        <dbReference type="UniProtKB" id="P10668"/>
    </source>
</evidence>
<evidence type="ECO:0000250" key="2">
    <source>
        <dbReference type="UniProtKB" id="P18760"/>
    </source>
</evidence>
<evidence type="ECO:0000250" key="3">
    <source>
        <dbReference type="UniProtKB" id="P23528"/>
    </source>
</evidence>
<evidence type="ECO:0000250" key="4">
    <source>
        <dbReference type="UniProtKB" id="P45695"/>
    </source>
</evidence>
<evidence type="ECO:0000255" key="5"/>
<evidence type="ECO:0000255" key="6">
    <source>
        <dbReference type="PROSITE-ProRule" id="PRU00599"/>
    </source>
</evidence>
<evidence type="ECO:0000305" key="7"/>
<proteinExistence type="evidence at transcript level"/>
<gene>
    <name type="primary">CFL1</name>
</gene>
<organism>
    <name type="scientific">Bos taurus</name>
    <name type="common">Bovine</name>
    <dbReference type="NCBI Taxonomy" id="9913"/>
    <lineage>
        <taxon>Eukaryota</taxon>
        <taxon>Metazoa</taxon>
        <taxon>Chordata</taxon>
        <taxon>Craniata</taxon>
        <taxon>Vertebrata</taxon>
        <taxon>Euteleostomi</taxon>
        <taxon>Mammalia</taxon>
        <taxon>Eutheria</taxon>
        <taxon>Laurasiatheria</taxon>
        <taxon>Artiodactyla</taxon>
        <taxon>Ruminantia</taxon>
        <taxon>Pecora</taxon>
        <taxon>Bovidae</taxon>
        <taxon>Bovinae</taxon>
        <taxon>Bos</taxon>
    </lineage>
</organism>
<keyword id="KW-0007">Acetylation</keyword>
<keyword id="KW-0009">Actin-binding</keyword>
<keyword id="KW-1003">Cell membrane</keyword>
<keyword id="KW-0966">Cell projection</keyword>
<keyword id="KW-0963">Cytoplasm</keyword>
<keyword id="KW-0206">Cytoskeleton</keyword>
<keyword id="KW-1017">Isopeptide bond</keyword>
<keyword id="KW-0472">Membrane</keyword>
<keyword id="KW-0539">Nucleus</keyword>
<keyword id="KW-0597">Phosphoprotein</keyword>
<keyword id="KW-1185">Reference proteome</keyword>
<keyword id="KW-0832">Ubl conjugation</keyword>
<accession>Q5E9F7</accession>
<accession>Q3SZ74</accession>